<accession>Q9NYU2</accession>
<accession>Q53QP2</accession>
<accession>Q53SL3</accession>
<accession>Q8IW30</accession>
<accession>Q9H8I4</accession>
<name>UGGG1_HUMAN</name>
<protein>
    <recommendedName>
        <fullName>UDP-glucose:glycoprotein glucosyltransferase 1</fullName>
        <shortName>UGT1</shortName>
        <shortName>hUGT1</shortName>
        <ecNumber evidence="9">2.4.1.-</ecNumber>
    </recommendedName>
    <alternativeName>
        <fullName>UDP--Glc:glycoprotein glucosyltransferase</fullName>
    </alternativeName>
    <alternativeName>
        <fullName>UDP-glucose ceramide glucosyltransferase-like 1</fullName>
    </alternativeName>
</protein>
<comment type="function">
    <text evidence="6">Recognizes glycoproteins with minor folding defects. Reglucosylates single N-glycans near the misfolded part of the protein, thus providing quality control for protein folding in the endoplasmic reticulum. Reglucosylated proteins are recognized by calreticulin for recycling to the endoplasmic reticulum and refolding or degradation.</text>
</comment>
<comment type="catalytic activity">
    <reaction evidence="6">
        <text>N(4)-(alpha-D-Man-(1-&gt;2)-alpha-D-Man-(1-&gt;2)-alpha-D-Man-(1-&gt;3)-[alpha-D-Man-(1-&gt;2)-alpha-D-Man-(1-&gt;3)-[alpha-D-Man-(1-&gt;2)-alpha-D-Man-(1-&gt;6)]-alpha-D-Man-(1-&gt;6)]-beta-D-Man-(1-&gt;4)-beta-D-GlcNAc-(1-&gt;4)-beta-D-GlcNAc)-L-asparaginyl-[protein] (N-glucan mannose isomer 9A1,2,3B1,2,3) + UDP-alpha-D-glucose = N(4)-(alpha-D-Glc-(1-&gt;3)-alpha-D-Man-(1-&gt;2)-alpha-D-Man-(1-&gt;2)-alpha-D-Man-(1-&gt;3)-[alpha-D-Man-(1-&gt;2)-alpha-D-Man-(1-&gt;3)-[alpha-D-Man-(1-&gt;2)-alpha-D-Man-(1-&gt;6)]-alpha-D-Man-(1-&gt;6)]-beta-D-Man-(1-&gt;4)-beta-D-GlcNAc-(1-&gt;4)-beta-D-GlcNAc)-L-asparaginyl-[protein] + UDP + H(+)</text>
        <dbReference type="Rhea" id="RHEA:61304"/>
        <dbReference type="Rhea" id="RHEA-COMP:14356"/>
        <dbReference type="Rhea" id="RHEA-COMP:14357"/>
        <dbReference type="ChEBI" id="CHEBI:15378"/>
        <dbReference type="ChEBI" id="CHEBI:58223"/>
        <dbReference type="ChEBI" id="CHEBI:58885"/>
        <dbReference type="ChEBI" id="CHEBI:59080"/>
        <dbReference type="ChEBI" id="CHEBI:139493"/>
    </reaction>
</comment>
<comment type="cofactor">
    <cofactor evidence="6">
        <name>Ca(2+)</name>
        <dbReference type="ChEBI" id="CHEBI:29108"/>
    </cofactor>
    <cofactor evidence="6">
        <name>Mn(2+)</name>
        <dbReference type="ChEBI" id="CHEBI:29035"/>
    </cofactor>
</comment>
<comment type="activity regulation">
    <text evidence="9">Catalytic activity is enhanced by complex formation with SELENOF.</text>
</comment>
<comment type="pathway">
    <text evidence="6 7">Protein modification; protein glycosylation.</text>
</comment>
<comment type="subunit">
    <text evidence="2 8 9">Monomer as well as in a tight complex with SELENOF (PubMed:24415556). Interacts with METTL23 (PubMed:23349634). Part of a large chaperone multiprotein complex comprising DNAJB11, HSP90B1, HSPA5, HYOU, PDIA2, PDIA4, PDIA6, PPIB, SDF2L1, UGGT1 and very small amounts of ERP29, but not, or at very low levels, CALR nor CANX (By similarity).</text>
</comment>
<comment type="subcellular location">
    <subcellularLocation>
        <location evidence="4 6">Endoplasmic reticulum lumen</location>
    </subcellularLocation>
    <subcellularLocation>
        <location evidence="4 6">Endoplasmic reticulum-Golgi intermediate compartment</location>
    </subcellularLocation>
</comment>
<comment type="alternative products">
    <event type="alternative splicing"/>
    <isoform>
        <id>Q9NYU2-1</id>
        <name>1</name>
        <sequence type="displayed"/>
    </isoform>
    <isoform>
        <id>Q9NYU2-2</id>
        <name>2</name>
        <sequence type="described" ref="VSP_036508"/>
    </isoform>
</comment>
<comment type="tissue specificity">
    <text evidence="6">Higher levels in pancreas, skeletal muscle, kidney, and brain. Low levels in lung and heart.</text>
</comment>
<comment type="induction">
    <text evidence="6">By tunicamycin and A23187. Induced 3-4 fold 10 hours after treatment.</text>
</comment>
<comment type="domain">
    <text evidence="1">The N-terminal non-catalytic domain is assumed to mediate recognition of proteins with partial folding defects.</text>
</comment>
<comment type="similarity">
    <text evidence="6">Belongs to the glycosyltransferase 8 family.</text>
</comment>
<comment type="sequence caution" evidence="12">
    <conflict type="erroneous gene model prediction">
        <sequence resource="EMBL-CDS" id="AAY14885"/>
    </conflict>
</comment>
<comment type="sequence caution" evidence="12">
    <conflict type="erroneous initiation">
        <sequence resource="EMBL-CDS" id="BAB14632"/>
    </conflict>
</comment>
<feature type="signal peptide" evidence="1">
    <location>
        <begin position="1"/>
        <end position="42"/>
    </location>
</feature>
<feature type="chain" id="PRO_0000012271" description="UDP-glucose:glycoprotein glucosyltransferase 1">
    <location>
        <begin position="43"/>
        <end position="1555"/>
    </location>
</feature>
<feature type="region of interest" description="Glucosyltransferase" evidence="1">
    <location>
        <begin position="1244"/>
        <end position="1555"/>
    </location>
</feature>
<feature type="region of interest" description="Disordered" evidence="5">
    <location>
        <begin position="1534"/>
        <end position="1555"/>
    </location>
</feature>
<feature type="short sequence motif" description="Prevents secretion from ER" evidence="4">
    <location>
        <begin position="1552"/>
        <end position="1555"/>
    </location>
</feature>
<feature type="modified residue" description="Phosphoserine" evidence="16">
    <location>
        <position position="1277"/>
    </location>
</feature>
<feature type="glycosylation site" description="N-linked (GlcNAc...) asparagine" evidence="3">
    <location>
        <position position="536"/>
    </location>
</feature>
<feature type="glycosylation site" description="N-linked (GlcNAc...) asparagine" evidence="3">
    <location>
        <position position="1228"/>
    </location>
</feature>
<feature type="splice variant" id="VSP_036508" description="In isoform 2." evidence="11">
    <location>
        <begin position="1"/>
        <end position="24"/>
    </location>
</feature>
<feature type="mutagenesis site" description="Loss of catalytic activity." evidence="9">
    <original>D</original>
    <variation>A</variation>
    <location>
        <position position="1358"/>
    </location>
</feature>
<feature type="mutagenesis site" description="Inactive.">
    <location>
        <begin position="1452"/>
        <end position="1457"/>
    </location>
</feature>
<feature type="mutagenesis site" description="Inactive." evidence="6">
    <original>D</original>
    <variation>A</variation>
    <location>
        <position position="1452"/>
    </location>
</feature>
<feature type="mutagenesis site" description="4% active." evidence="6">
    <original>Q</original>
    <variation>A</variation>
    <location>
        <position position="1453"/>
    </location>
</feature>
<feature type="mutagenesis site" description="Inactive." evidence="6">
    <original>D</original>
    <variation>A</variation>
    <location>
        <position position="1454"/>
    </location>
</feature>
<feature type="mutagenesis site" description="2% active." evidence="6">
    <original>L</original>
    <variation>A</variation>
    <location>
        <position position="1455"/>
    </location>
</feature>
<feature type="mutagenesis site" description="41% active." evidence="6">
    <original>P</original>
    <variation>A</variation>
    <location>
        <position position="1456"/>
    </location>
</feature>
<feature type="mutagenesis site" description="7% active." evidence="6">
    <original>N</original>
    <variation>A</variation>
    <location>
        <position position="1457"/>
    </location>
</feature>
<feature type="sequence conflict" description="In Ref. 4; BAB14632." evidence="12" ref="4">
    <original>A</original>
    <variation>T</variation>
    <location>
        <position position="1487"/>
    </location>
</feature>
<sequence length="1555" mass="177190">MGCKGDASGACAAGALPVTGVCYKMGVLVVLTVLWLFSSVKADSKAITTSLTTKWFSTPLLLEASEFLAEDSQEKFWNFVEASQNIGSSDHDGTDYSYYHAILEAAFQFLSPLQQNLFKFCLSLRSYSATIQAFQQIAADEPPPEGCNSFFSVHGKKTCESDTLEALLLTASERPKPLLFKGDHRYPSSNPESPVVIFYSEIGSEEFSNFHRQLISKSNAGKINYVFRHYIFNPRKEPVYLSGYGVELAIKSTEYKAKDDTQVKGTEVNTTVIGENDPIDEVQGFLFGKLRDLHPDLEGQLKELRKHLVESTNEMAPLKVWQLQDLSFQTAARILASPVELALVVMKDLSQNFPTKARAITKTAVSSELRTEVEENQKYFKGTLGLQPGDSALFINGLHMDLDTQDIFSLFDVLRNEARVMEGLHRLGIEGLSLHNVLKLNIQPSEADYAVDIRSPAISWVNNLEVDSRYNSWPSSLQELLRPTFPGVIRQIRKNLHNMVFIVDPAHETTAELMNTAEMFLSNHIPLRIGFIFVVNDSEDVDGMQDAGVAVLRAYNYVAQEVDDYHAFQTLTHIYNKVRTGEKVKVEHVVSVLEKKYPYVEVNSILGIDSAYDRNRKEARGYYEQTGVGPLPVVLFNGMPFEREQLDPDELETITMHKILETTTFFQRAVYLGELPHDQDVVEYIMNQPNVVPRINSRILTAERDYLDLTASNNFFVDDYARFTILDSQGKTAAVANSMNYLTKKGMSSKEIYDDSFIRPVTFWIVGDFDSPSGRQLLYDAIKHQKSSNNVRISMINNPAKEISYENTQISRAIWAALQTQTSNAAKNFITKMAKEGAAEALAAGADIAEFSVGGMDFSLFKEVFESSKMDFILSHAVYCRDVLKLKKGQRAVISNGRIIGPLEDSELFNQDDFHLLENIILKTSGQKIKSHIQQLRVEEDVASDLVMKVDALLSAQPKGDPRIEYQFFEDRHSAIKLRPKEGETYFDVVAVVDPVTREAQRLAPLLLVLAQLINMNLRVFMNCQSKLSDMPLKSFYRYVLEPEISFTSDNSFAKGPIAKFLDMPQSPLFTLNLNTPESWMVESVRTPYDLDNIYLEEVDSVVAAEYELEYLLLEGHCYDITTGQPPRGLQFTLGTSANPVIVDTIVMANLGYFQLKANPGAWILRLRKGRSEDIYRIYSHDGTDSPPDADEVVIVLNNFKSKIIKVKVQKKADMVNEDLLSDGTSENESGFWDSFKWGFTGQKTEEVKQDKDDIINIFSVASGHLYERFLRIMMLSVLKNTKTPVKFWFLKNYLSPTFKEFIPYMANEYNFQYELVQYKWPRWLHQQTEKQRIIWGYKILFLDVLFPLVVDKFLFVDADQIVRTDLKELRDFNLDGAPYGYTPFCDSRREMDGYRFWKSGYWASHLAGRKYHISALYVVDLKKFRKIAAGDRLRGQYQGLSQDPNSLSNLDQDLPNNMIHQVPIKSLPQEWLWCETWCDDASKKRAKTIDLCNNPMTKEPKLEAAVRIVPEWQDYDQEIKQLQIRFQKEKETGALYKEKTKEPSREGPQKREEL</sequence>
<proteinExistence type="evidence at protein level"/>
<keyword id="KW-0025">Alternative splicing</keyword>
<keyword id="KW-0256">Endoplasmic reticulum</keyword>
<keyword id="KW-0325">Glycoprotein</keyword>
<keyword id="KW-0328">Glycosyltransferase</keyword>
<keyword id="KW-0597">Phosphoprotein</keyword>
<keyword id="KW-1267">Proteomics identification</keyword>
<keyword id="KW-1185">Reference proteome</keyword>
<keyword id="KW-0732">Signal</keyword>
<keyword id="KW-0808">Transferase</keyword>
<dbReference type="EC" id="2.4.1.-" evidence="9"/>
<dbReference type="EMBL" id="AF227905">
    <property type="protein sequence ID" value="AAF66232.1"/>
    <property type="molecule type" value="mRNA"/>
</dbReference>
<dbReference type="EMBL" id="AC017079">
    <property type="protein sequence ID" value="AAY14735.1"/>
    <property type="molecule type" value="Genomic_DNA"/>
</dbReference>
<dbReference type="EMBL" id="AC108059">
    <property type="protein sequence ID" value="AAY14885.1"/>
    <property type="status" value="ALT_SEQ"/>
    <property type="molecule type" value="Genomic_DNA"/>
</dbReference>
<dbReference type="EMBL" id="BC041098">
    <property type="protein sequence ID" value="AAH41098.1"/>
    <property type="molecule type" value="mRNA"/>
</dbReference>
<dbReference type="EMBL" id="AK023671">
    <property type="protein sequence ID" value="BAB14632.1"/>
    <property type="status" value="ALT_INIT"/>
    <property type="molecule type" value="mRNA"/>
</dbReference>
<dbReference type="CCDS" id="CCDS2154.1">
    <molecule id="Q9NYU2-1"/>
</dbReference>
<dbReference type="RefSeq" id="NP_064505.1">
    <molecule id="Q9NYU2-1"/>
    <property type="nucleotide sequence ID" value="NM_020120.4"/>
</dbReference>
<dbReference type="SMR" id="Q9NYU2"/>
<dbReference type="BioGRID" id="121217">
    <property type="interactions" value="241"/>
</dbReference>
<dbReference type="FunCoup" id="Q9NYU2">
    <property type="interactions" value="2811"/>
</dbReference>
<dbReference type="IntAct" id="Q9NYU2">
    <property type="interactions" value="79"/>
</dbReference>
<dbReference type="MINT" id="Q9NYU2"/>
<dbReference type="STRING" id="9606.ENSP00000259253"/>
<dbReference type="CAZy" id="GT24">
    <property type="family name" value="Glycosyltransferase Family 24"/>
</dbReference>
<dbReference type="GlyConnect" id="1871">
    <property type="glycosylation" value="6 N-Linked glycans (1 site)"/>
</dbReference>
<dbReference type="GlyCosmos" id="Q9NYU2">
    <property type="glycosylation" value="4 sites, 7 glycans"/>
</dbReference>
<dbReference type="GlyGen" id="Q9NYU2">
    <property type="glycosylation" value="9 sites, 28 N-linked glycans (3 sites), 2 O-linked glycans (3 sites)"/>
</dbReference>
<dbReference type="iPTMnet" id="Q9NYU2"/>
<dbReference type="MetOSite" id="Q9NYU2"/>
<dbReference type="PhosphoSitePlus" id="Q9NYU2"/>
<dbReference type="SwissPalm" id="Q9NYU2"/>
<dbReference type="BioMuta" id="UGGT1"/>
<dbReference type="DMDM" id="224471872"/>
<dbReference type="CPTAC" id="CPTAC-290"/>
<dbReference type="jPOST" id="Q9NYU2"/>
<dbReference type="MassIVE" id="Q9NYU2"/>
<dbReference type="PaxDb" id="9606-ENSP00000259253"/>
<dbReference type="PeptideAtlas" id="Q9NYU2"/>
<dbReference type="PRIDE" id="Q9NYU2"/>
<dbReference type="ProteomicsDB" id="83277">
    <molecule id="Q9NYU2-1"/>
</dbReference>
<dbReference type="ProteomicsDB" id="83278">
    <molecule id="Q9NYU2-2"/>
</dbReference>
<dbReference type="Pumba" id="Q9NYU2"/>
<dbReference type="Antibodypedia" id="2454">
    <property type="antibodies" value="147 antibodies from 27 providers"/>
</dbReference>
<dbReference type="DNASU" id="56886"/>
<dbReference type="Ensembl" id="ENST00000259253.11">
    <molecule id="Q9NYU2-1"/>
    <property type="protein sequence ID" value="ENSP00000259253.6"/>
    <property type="gene ID" value="ENSG00000136731.13"/>
</dbReference>
<dbReference type="GeneID" id="56886"/>
<dbReference type="KEGG" id="hsa:56886"/>
<dbReference type="MANE-Select" id="ENST00000259253.11">
    <property type="protein sequence ID" value="ENSP00000259253.6"/>
    <property type="RefSeq nucleotide sequence ID" value="NM_020120.4"/>
    <property type="RefSeq protein sequence ID" value="NP_064505.1"/>
</dbReference>
<dbReference type="UCSC" id="uc002tps.4">
    <molecule id="Q9NYU2-1"/>
    <property type="organism name" value="human"/>
</dbReference>
<dbReference type="AGR" id="HGNC:15663"/>
<dbReference type="CTD" id="56886"/>
<dbReference type="DisGeNET" id="56886"/>
<dbReference type="GeneCards" id="UGGT1"/>
<dbReference type="HGNC" id="HGNC:15663">
    <property type="gene designation" value="UGGT1"/>
</dbReference>
<dbReference type="HPA" id="ENSG00000136731">
    <property type="expression patterns" value="Low tissue specificity"/>
</dbReference>
<dbReference type="MIM" id="605897">
    <property type="type" value="gene"/>
</dbReference>
<dbReference type="neXtProt" id="NX_Q9NYU2"/>
<dbReference type="OpenTargets" id="ENSG00000136731"/>
<dbReference type="PharmGKB" id="PA38014"/>
<dbReference type="VEuPathDB" id="HostDB:ENSG00000136731"/>
<dbReference type="eggNOG" id="KOG1879">
    <property type="taxonomic scope" value="Eukaryota"/>
</dbReference>
<dbReference type="GeneTree" id="ENSGT00390000004600"/>
<dbReference type="HOGENOM" id="CLU_002668_1_1_1"/>
<dbReference type="InParanoid" id="Q9NYU2"/>
<dbReference type="OMA" id="RQTKTRF"/>
<dbReference type="OrthoDB" id="27683at2759"/>
<dbReference type="PAN-GO" id="Q9NYU2">
    <property type="GO annotations" value="5 GO annotations based on evolutionary models"/>
</dbReference>
<dbReference type="PhylomeDB" id="Q9NYU2"/>
<dbReference type="TreeFam" id="TF300320"/>
<dbReference type="PathwayCommons" id="Q9NYU2"/>
<dbReference type="Reactome" id="R-HSA-901032">
    <property type="pathway name" value="ER Quality Control Compartment (ERQC)"/>
</dbReference>
<dbReference type="SignaLink" id="Q9NYU2"/>
<dbReference type="UniPathway" id="UPA00378"/>
<dbReference type="BioGRID-ORCS" id="56886">
    <property type="hits" value="16 hits in 1161 CRISPR screens"/>
</dbReference>
<dbReference type="ChiTaRS" id="UGGT1">
    <property type="organism name" value="human"/>
</dbReference>
<dbReference type="GenomeRNAi" id="56886"/>
<dbReference type="Pharos" id="Q9NYU2">
    <property type="development level" value="Tbio"/>
</dbReference>
<dbReference type="PRO" id="PR:Q9NYU2"/>
<dbReference type="Proteomes" id="UP000005640">
    <property type="component" value="Chromosome 2"/>
</dbReference>
<dbReference type="RNAct" id="Q9NYU2">
    <property type="molecule type" value="protein"/>
</dbReference>
<dbReference type="Bgee" id="ENSG00000136731">
    <property type="expression patterns" value="Expressed in calcaneal tendon and 189 other cell types or tissues"/>
</dbReference>
<dbReference type="ExpressionAtlas" id="Q9NYU2">
    <property type="expression patterns" value="baseline and differential"/>
</dbReference>
<dbReference type="GO" id="GO:0005783">
    <property type="term" value="C:endoplasmic reticulum"/>
    <property type="evidence" value="ECO:0000314"/>
    <property type="project" value="UniProtKB"/>
</dbReference>
<dbReference type="GO" id="GO:0005788">
    <property type="term" value="C:endoplasmic reticulum lumen"/>
    <property type="evidence" value="ECO:0000304"/>
    <property type="project" value="Reactome"/>
</dbReference>
<dbReference type="GO" id="GO:0044322">
    <property type="term" value="C:endoplasmic reticulum quality control compartment"/>
    <property type="evidence" value="ECO:0007669"/>
    <property type="project" value="GOC"/>
</dbReference>
<dbReference type="GO" id="GO:0005793">
    <property type="term" value="C:endoplasmic reticulum-Golgi intermediate compartment"/>
    <property type="evidence" value="ECO:0000250"/>
    <property type="project" value="UniProtKB"/>
</dbReference>
<dbReference type="GO" id="GO:0070062">
    <property type="term" value="C:extracellular exosome"/>
    <property type="evidence" value="ECO:0007005"/>
    <property type="project" value="UniProtKB"/>
</dbReference>
<dbReference type="GO" id="GO:0032991">
    <property type="term" value="C:protein-containing complex"/>
    <property type="evidence" value="ECO:0000314"/>
    <property type="project" value="UniProtKB"/>
</dbReference>
<dbReference type="GO" id="GO:0003980">
    <property type="term" value="F:UDP-glucose:glycoprotein glucosyltransferase activity"/>
    <property type="evidence" value="ECO:0000314"/>
    <property type="project" value="UniProtKB"/>
</dbReference>
<dbReference type="GO" id="GO:0051082">
    <property type="term" value="F:unfolded protein binding"/>
    <property type="evidence" value="ECO:0000314"/>
    <property type="project" value="UniProtKB"/>
</dbReference>
<dbReference type="GO" id="GO:0051084">
    <property type="term" value="P:'de novo' post-translational protein folding"/>
    <property type="evidence" value="ECO:0000304"/>
    <property type="project" value="UniProtKB"/>
</dbReference>
<dbReference type="GO" id="GO:1904380">
    <property type="term" value="P:endoplasmic reticulum mannose trimming"/>
    <property type="evidence" value="ECO:0000304"/>
    <property type="project" value="Reactome"/>
</dbReference>
<dbReference type="GO" id="GO:0018279">
    <property type="term" value="P:protein N-linked glycosylation via asparagine"/>
    <property type="evidence" value="ECO:0000318"/>
    <property type="project" value="GO_Central"/>
</dbReference>
<dbReference type="CDD" id="cd06432">
    <property type="entry name" value="GT8_HUGT1_C_like"/>
    <property type="match status" value="1"/>
</dbReference>
<dbReference type="FunFam" id="3.90.550.10:FF:000004">
    <property type="entry name" value="UDP-glucose glycoprotein glucosyltransferase 1"/>
    <property type="match status" value="1"/>
</dbReference>
<dbReference type="Gene3D" id="3.90.550.10">
    <property type="entry name" value="Spore Coat Polysaccharide Biosynthesis Protein SpsA, Chain A"/>
    <property type="match status" value="1"/>
</dbReference>
<dbReference type="InterPro" id="IPR040497">
    <property type="entry name" value="Glyco_transf_24"/>
</dbReference>
<dbReference type="InterPro" id="IPR029044">
    <property type="entry name" value="Nucleotide-diphossugar_trans"/>
</dbReference>
<dbReference type="InterPro" id="IPR009448">
    <property type="entry name" value="UDP-g_GGtrans"/>
</dbReference>
<dbReference type="InterPro" id="IPR040693">
    <property type="entry name" value="UGGT_TRXL_1"/>
</dbReference>
<dbReference type="InterPro" id="IPR040694">
    <property type="entry name" value="UGGT_TRXL_2"/>
</dbReference>
<dbReference type="InterPro" id="IPR040692">
    <property type="entry name" value="UGGT_TRXL_3"/>
</dbReference>
<dbReference type="InterPro" id="IPR040525">
    <property type="entry name" value="UGGT_TRXL_4"/>
</dbReference>
<dbReference type="PANTHER" id="PTHR11226">
    <property type="entry name" value="UDP-GLUCOSE GLYCOPROTEIN:GLUCOSYLTRANSFERASE"/>
    <property type="match status" value="1"/>
</dbReference>
<dbReference type="PANTHER" id="PTHR11226:SF3">
    <property type="entry name" value="UDP-GLUCOSE:GLYCOPROTEIN GLUCOSYLTRANSFERASE 1"/>
    <property type="match status" value="1"/>
</dbReference>
<dbReference type="Pfam" id="PF18404">
    <property type="entry name" value="Glyco_transf_24"/>
    <property type="match status" value="1"/>
</dbReference>
<dbReference type="Pfam" id="PF18400">
    <property type="entry name" value="Thioredoxin_12"/>
    <property type="match status" value="1"/>
</dbReference>
<dbReference type="Pfam" id="PF18401">
    <property type="entry name" value="Thioredoxin_13"/>
    <property type="match status" value="1"/>
</dbReference>
<dbReference type="Pfam" id="PF18402">
    <property type="entry name" value="Thioredoxin_14"/>
    <property type="match status" value="1"/>
</dbReference>
<dbReference type="Pfam" id="PF18403">
    <property type="entry name" value="Thioredoxin_15"/>
    <property type="match status" value="1"/>
</dbReference>
<dbReference type="Pfam" id="PF06427">
    <property type="entry name" value="UDP-g_GGTase"/>
    <property type="match status" value="1"/>
</dbReference>
<dbReference type="SUPFAM" id="SSF53448">
    <property type="entry name" value="Nucleotide-diphospho-sugar transferases"/>
    <property type="match status" value="1"/>
</dbReference>
<dbReference type="PROSITE" id="PS00014">
    <property type="entry name" value="ER_TARGET"/>
    <property type="match status" value="1"/>
</dbReference>
<evidence type="ECO:0000250" key="1"/>
<evidence type="ECO:0000250" key="2">
    <source>
        <dbReference type="UniProtKB" id="Q9JLA3"/>
    </source>
</evidence>
<evidence type="ECO:0000255" key="3"/>
<evidence type="ECO:0000255" key="4">
    <source>
        <dbReference type="PROSITE-ProRule" id="PRU10138"/>
    </source>
</evidence>
<evidence type="ECO:0000256" key="5">
    <source>
        <dbReference type="SAM" id="MobiDB-lite"/>
    </source>
</evidence>
<evidence type="ECO:0000269" key="6">
    <source>
    </source>
</evidence>
<evidence type="ECO:0000269" key="7">
    <source>
    </source>
</evidence>
<evidence type="ECO:0000269" key="8">
    <source>
    </source>
</evidence>
<evidence type="ECO:0000269" key="9">
    <source>
    </source>
</evidence>
<evidence type="ECO:0000303" key="10">
    <source>
    </source>
</evidence>
<evidence type="ECO:0000303" key="11">
    <source>
    </source>
</evidence>
<evidence type="ECO:0000305" key="12"/>
<evidence type="ECO:0000312" key="13">
    <source>
        <dbReference type="EMBL" id="AAF66232.1"/>
    </source>
</evidence>
<evidence type="ECO:0000312" key="14">
    <source>
        <dbReference type="EMBL" id="AAH41098.1"/>
    </source>
</evidence>
<evidence type="ECO:0000312" key="15">
    <source>
        <dbReference type="EMBL" id="BAB14632.1"/>
    </source>
</evidence>
<evidence type="ECO:0007744" key="16">
    <source>
    </source>
</evidence>
<gene>
    <name type="primary">UGGT1</name>
    <name type="synonym">GT</name>
    <name type="synonym">UGCGL1</name>
    <name type="synonym">UGGT</name>
    <name evidence="10" type="synonym">UGT1</name>
    <name evidence="2" type="synonym">UGTR</name>
</gene>
<reference evidence="12 13" key="1">
    <citation type="journal article" date="2000" name="Biochemistry">
        <title>Two homologues encoding human UDP-glucose:glycoprotein glucosyltransferase differ in mRNA expression and enzymatic activity.</title>
        <authorList>
            <person name="Arnold S.M."/>
            <person name="Fessler L.I."/>
            <person name="Fessler J.H."/>
            <person name="Kaufman R.J."/>
        </authorList>
    </citation>
    <scope>NUCLEOTIDE SEQUENCE [MRNA] (ISOFORM 1)</scope>
    <scope>FUNCTION</scope>
    <scope>CATALYTIC ACTIVITY</scope>
    <scope>COFACTOR</scope>
    <scope>INDUCTION</scope>
    <scope>SUBCELLULAR LOCATION</scope>
    <scope>TISSUE SPECIFICITY</scope>
    <scope>MUTAGENESIS OF ASP-1452; GLN-1453; ASP-1454; LEU-1455; PRO-1456 AND ASN-1457</scope>
    <source>
        <tissue evidence="13">Fetal liver</tissue>
    </source>
</reference>
<reference key="2">
    <citation type="journal article" date="2005" name="Nature">
        <title>Generation and annotation of the DNA sequences of human chromosomes 2 and 4.</title>
        <authorList>
            <person name="Hillier L.W."/>
            <person name="Graves T.A."/>
            <person name="Fulton R.S."/>
            <person name="Fulton L.A."/>
            <person name="Pepin K.H."/>
            <person name="Minx P."/>
            <person name="Wagner-McPherson C."/>
            <person name="Layman D."/>
            <person name="Wylie K."/>
            <person name="Sekhon M."/>
            <person name="Becker M.C."/>
            <person name="Fewell G.A."/>
            <person name="Delehaunty K.D."/>
            <person name="Miner T.L."/>
            <person name="Nash W.E."/>
            <person name="Kremitzki C."/>
            <person name="Oddy L."/>
            <person name="Du H."/>
            <person name="Sun H."/>
            <person name="Bradshaw-Cordum H."/>
            <person name="Ali J."/>
            <person name="Carter J."/>
            <person name="Cordes M."/>
            <person name="Harris A."/>
            <person name="Isak A."/>
            <person name="van Brunt A."/>
            <person name="Nguyen C."/>
            <person name="Du F."/>
            <person name="Courtney L."/>
            <person name="Kalicki J."/>
            <person name="Ozersky P."/>
            <person name="Abbott S."/>
            <person name="Armstrong J."/>
            <person name="Belter E.A."/>
            <person name="Caruso L."/>
            <person name="Cedroni M."/>
            <person name="Cotton M."/>
            <person name="Davidson T."/>
            <person name="Desai A."/>
            <person name="Elliott G."/>
            <person name="Erb T."/>
            <person name="Fronick C."/>
            <person name="Gaige T."/>
            <person name="Haakenson W."/>
            <person name="Haglund K."/>
            <person name="Holmes A."/>
            <person name="Harkins R."/>
            <person name="Kim K."/>
            <person name="Kruchowski S.S."/>
            <person name="Strong C.M."/>
            <person name="Grewal N."/>
            <person name="Goyea E."/>
            <person name="Hou S."/>
            <person name="Levy A."/>
            <person name="Martinka S."/>
            <person name="Mead K."/>
            <person name="McLellan M.D."/>
            <person name="Meyer R."/>
            <person name="Randall-Maher J."/>
            <person name="Tomlinson C."/>
            <person name="Dauphin-Kohlberg S."/>
            <person name="Kozlowicz-Reilly A."/>
            <person name="Shah N."/>
            <person name="Swearengen-Shahid S."/>
            <person name="Snider J."/>
            <person name="Strong J.T."/>
            <person name="Thompson J."/>
            <person name="Yoakum M."/>
            <person name="Leonard S."/>
            <person name="Pearman C."/>
            <person name="Trani L."/>
            <person name="Radionenko M."/>
            <person name="Waligorski J.E."/>
            <person name="Wang C."/>
            <person name="Rock S.M."/>
            <person name="Tin-Wollam A.-M."/>
            <person name="Maupin R."/>
            <person name="Latreille P."/>
            <person name="Wendl M.C."/>
            <person name="Yang S.-P."/>
            <person name="Pohl C."/>
            <person name="Wallis J.W."/>
            <person name="Spieth J."/>
            <person name="Bieri T.A."/>
            <person name="Berkowicz N."/>
            <person name="Nelson J.O."/>
            <person name="Osborne J."/>
            <person name="Ding L."/>
            <person name="Meyer R."/>
            <person name="Sabo A."/>
            <person name="Shotland Y."/>
            <person name="Sinha P."/>
            <person name="Wohldmann P.E."/>
            <person name="Cook L.L."/>
            <person name="Hickenbotham M.T."/>
            <person name="Eldred J."/>
            <person name="Williams D."/>
            <person name="Jones T.A."/>
            <person name="She X."/>
            <person name="Ciccarelli F.D."/>
            <person name="Izaurralde E."/>
            <person name="Taylor J."/>
            <person name="Schmutz J."/>
            <person name="Myers R.M."/>
            <person name="Cox D.R."/>
            <person name="Huang X."/>
            <person name="McPherson J.D."/>
            <person name="Mardis E.R."/>
            <person name="Clifton S.W."/>
            <person name="Warren W.C."/>
            <person name="Chinwalla A.T."/>
            <person name="Eddy S.R."/>
            <person name="Marra M.A."/>
            <person name="Ovcharenko I."/>
            <person name="Furey T.S."/>
            <person name="Miller W."/>
            <person name="Eichler E.E."/>
            <person name="Bork P."/>
            <person name="Suyama M."/>
            <person name="Torrents D."/>
            <person name="Waterston R.H."/>
            <person name="Wilson R.K."/>
        </authorList>
    </citation>
    <scope>NUCLEOTIDE SEQUENCE [LARGE SCALE GENOMIC DNA]</scope>
</reference>
<reference evidence="14" key="3">
    <citation type="journal article" date="2004" name="Genome Res.">
        <title>The status, quality, and expansion of the NIH full-length cDNA project: the Mammalian Gene Collection (MGC).</title>
        <authorList>
            <consortium name="The MGC Project Team"/>
        </authorList>
    </citation>
    <scope>NUCLEOTIDE SEQUENCE [LARGE SCALE MRNA] (ISOFORM 2)</scope>
    <source>
        <tissue evidence="14">Eye</tissue>
    </source>
</reference>
<reference evidence="12 15" key="4">
    <citation type="journal article" date="2004" name="Nat. Genet.">
        <title>Complete sequencing and characterization of 21,243 full-length human cDNAs.</title>
        <authorList>
            <person name="Ota T."/>
            <person name="Suzuki Y."/>
            <person name="Nishikawa T."/>
            <person name="Otsuki T."/>
            <person name="Sugiyama T."/>
            <person name="Irie R."/>
            <person name="Wakamatsu A."/>
            <person name="Hayashi K."/>
            <person name="Sato H."/>
            <person name="Nagai K."/>
            <person name="Kimura K."/>
            <person name="Makita H."/>
            <person name="Sekine M."/>
            <person name="Obayashi M."/>
            <person name="Nishi T."/>
            <person name="Shibahara T."/>
            <person name="Tanaka T."/>
            <person name="Ishii S."/>
            <person name="Yamamoto J."/>
            <person name="Saito K."/>
            <person name="Kawai Y."/>
            <person name="Isono Y."/>
            <person name="Nakamura Y."/>
            <person name="Nagahari K."/>
            <person name="Murakami K."/>
            <person name="Yasuda T."/>
            <person name="Iwayanagi T."/>
            <person name="Wagatsuma M."/>
            <person name="Shiratori A."/>
            <person name="Sudo H."/>
            <person name="Hosoiri T."/>
            <person name="Kaku Y."/>
            <person name="Kodaira H."/>
            <person name="Kondo H."/>
            <person name="Sugawara M."/>
            <person name="Takahashi M."/>
            <person name="Kanda K."/>
            <person name="Yokoi T."/>
            <person name="Furuya T."/>
            <person name="Kikkawa E."/>
            <person name="Omura Y."/>
            <person name="Abe K."/>
            <person name="Kamihara K."/>
            <person name="Katsuta N."/>
            <person name="Sato K."/>
            <person name="Tanikawa M."/>
            <person name="Yamazaki M."/>
            <person name="Ninomiya K."/>
            <person name="Ishibashi T."/>
            <person name="Yamashita H."/>
            <person name="Murakawa K."/>
            <person name="Fujimori K."/>
            <person name="Tanai H."/>
            <person name="Kimata M."/>
            <person name="Watanabe M."/>
            <person name="Hiraoka S."/>
            <person name="Chiba Y."/>
            <person name="Ishida S."/>
            <person name="Ono Y."/>
            <person name="Takiguchi S."/>
            <person name="Watanabe S."/>
            <person name="Yosida M."/>
            <person name="Hotuta T."/>
            <person name="Kusano J."/>
            <person name="Kanehori K."/>
            <person name="Takahashi-Fujii A."/>
            <person name="Hara H."/>
            <person name="Tanase T.-O."/>
            <person name="Nomura Y."/>
            <person name="Togiya S."/>
            <person name="Komai F."/>
            <person name="Hara R."/>
            <person name="Takeuchi K."/>
            <person name="Arita M."/>
            <person name="Imose N."/>
            <person name="Musashino K."/>
            <person name="Yuuki H."/>
            <person name="Oshima A."/>
            <person name="Sasaki N."/>
            <person name="Aotsuka S."/>
            <person name="Yoshikawa Y."/>
            <person name="Matsunawa H."/>
            <person name="Ichihara T."/>
            <person name="Shiohata N."/>
            <person name="Sano S."/>
            <person name="Moriya S."/>
            <person name="Momiyama H."/>
            <person name="Satoh N."/>
            <person name="Takami S."/>
            <person name="Terashima Y."/>
            <person name="Suzuki O."/>
            <person name="Nakagawa S."/>
            <person name="Senoh A."/>
            <person name="Mizoguchi H."/>
            <person name="Goto Y."/>
            <person name="Shimizu F."/>
            <person name="Wakebe H."/>
            <person name="Hishigaki H."/>
            <person name="Watanabe T."/>
            <person name="Sugiyama A."/>
            <person name="Takemoto M."/>
            <person name="Kawakami B."/>
            <person name="Yamazaki M."/>
            <person name="Watanabe K."/>
            <person name="Kumagai A."/>
            <person name="Itakura S."/>
            <person name="Fukuzumi Y."/>
            <person name="Fujimori Y."/>
            <person name="Komiyama M."/>
            <person name="Tashiro H."/>
            <person name="Tanigami A."/>
            <person name="Fujiwara T."/>
            <person name="Ono T."/>
            <person name="Yamada K."/>
            <person name="Fujii Y."/>
            <person name="Ozaki K."/>
            <person name="Hirao M."/>
            <person name="Ohmori Y."/>
            <person name="Kawabata A."/>
            <person name="Hikiji T."/>
            <person name="Kobatake N."/>
            <person name="Inagaki H."/>
            <person name="Ikema Y."/>
            <person name="Okamoto S."/>
            <person name="Okitani R."/>
            <person name="Kawakami T."/>
            <person name="Noguchi S."/>
            <person name="Itoh T."/>
            <person name="Shigeta K."/>
            <person name="Senba T."/>
            <person name="Matsumura K."/>
            <person name="Nakajima Y."/>
            <person name="Mizuno T."/>
            <person name="Morinaga M."/>
            <person name="Sasaki M."/>
            <person name="Togashi T."/>
            <person name="Oyama M."/>
            <person name="Hata H."/>
            <person name="Watanabe M."/>
            <person name="Komatsu T."/>
            <person name="Mizushima-Sugano J."/>
            <person name="Satoh T."/>
            <person name="Shirai Y."/>
            <person name="Takahashi Y."/>
            <person name="Nakagawa K."/>
            <person name="Okumura K."/>
            <person name="Nagase T."/>
            <person name="Nomura N."/>
            <person name="Kikuchi H."/>
            <person name="Masuho Y."/>
            <person name="Yamashita R."/>
            <person name="Nakai K."/>
            <person name="Yada T."/>
            <person name="Nakamura Y."/>
            <person name="Ohara O."/>
            <person name="Isogai T."/>
            <person name="Sugano S."/>
        </authorList>
    </citation>
    <scope>NUCLEOTIDE SEQUENCE [LARGE SCALE MRNA] OF 710-1555 (ISOFORMS 1/2)</scope>
    <source>
        <tissue evidence="15">Placenta</tissue>
    </source>
</reference>
<reference key="5">
    <citation type="journal article" date="2011" name="BMC Syst. Biol.">
        <title>Initial characterization of the human central proteome.</title>
        <authorList>
            <person name="Burkard T.R."/>
            <person name="Planyavsky M."/>
            <person name="Kaupe I."/>
            <person name="Breitwieser F.P."/>
            <person name="Buerckstuemmer T."/>
            <person name="Bennett K.L."/>
            <person name="Superti-Furga G."/>
            <person name="Colinge J."/>
        </authorList>
    </citation>
    <scope>IDENTIFICATION BY MASS SPECTROMETRY [LARGE SCALE ANALYSIS]</scope>
</reference>
<reference key="6">
    <citation type="journal article" date="2011" name="Sci. Signal.">
        <title>System-wide temporal characterization of the proteome and phosphoproteome of human embryonic stem cell differentiation.</title>
        <authorList>
            <person name="Rigbolt K.T."/>
            <person name="Prokhorova T.A."/>
            <person name="Akimov V."/>
            <person name="Henningsen J."/>
            <person name="Johansen P.T."/>
            <person name="Kratchmarova I."/>
            <person name="Kassem M."/>
            <person name="Mann M."/>
            <person name="Olsen J.V."/>
            <person name="Blagoev B."/>
        </authorList>
    </citation>
    <scope>PHOSPHORYLATION [LARGE SCALE ANALYSIS] AT SER-1277</scope>
    <scope>IDENTIFICATION BY MASS SPECTROMETRY [LARGE SCALE ANALYSIS]</scope>
</reference>
<reference key="7">
    <citation type="journal article" date="2013" name="PLoS Genet.">
        <title>A newly uncovered group of distantly related lysine methyltransferases preferentially interact with molecular chaperones to regulate their activity.</title>
        <authorList>
            <person name="Cloutier P."/>
            <person name="Lavallee-Adam M."/>
            <person name="Faubert D."/>
            <person name="Blanchette M."/>
            <person name="Coulombe B."/>
        </authorList>
    </citation>
    <scope>INTERACTION WITH METTL23</scope>
</reference>
<reference key="8">
    <citation type="journal article" date="2014" name="Glycobiology">
        <title>Both isoforms of human UDP-glucose:glycoprotein glucosyltransferase are enzymatically active.</title>
        <authorList>
            <person name="Takeda Y."/>
            <person name="Seko A."/>
            <person name="Hachisu M."/>
            <person name="Daikoku S."/>
            <person name="Izumi M."/>
            <person name="Koizumi A."/>
            <person name="Fujikawa K."/>
            <person name="Kajihara Y."/>
            <person name="Ito Y."/>
        </authorList>
    </citation>
    <scope>FUNCTION</scope>
    <scope>ACTIVITY REGULATION</scope>
    <scope>INTERACTION WITH SELENOF</scope>
    <scope>MUTAGENESIS OF ASP-1358</scope>
</reference>
<reference key="9">
    <citation type="journal article" date="2014" name="J. Proteomics">
        <title>An enzyme assisted RP-RPLC approach for in-depth analysis of human liver phosphoproteome.</title>
        <authorList>
            <person name="Bian Y."/>
            <person name="Song C."/>
            <person name="Cheng K."/>
            <person name="Dong M."/>
            <person name="Wang F."/>
            <person name="Huang J."/>
            <person name="Sun D."/>
            <person name="Wang L."/>
            <person name="Ye M."/>
            <person name="Zou H."/>
        </authorList>
    </citation>
    <scope>IDENTIFICATION BY MASS SPECTROMETRY [LARGE SCALE ANALYSIS]</scope>
    <source>
        <tissue>Liver</tissue>
    </source>
</reference>
<reference key="10">
    <citation type="journal article" date="2015" name="Proteomics">
        <title>N-terminome analysis of the human mitochondrial proteome.</title>
        <authorList>
            <person name="Vaca Jacome A.S."/>
            <person name="Rabilloud T."/>
            <person name="Schaeffer-Reiss C."/>
            <person name="Rompais M."/>
            <person name="Ayoub D."/>
            <person name="Lane L."/>
            <person name="Bairoch A."/>
            <person name="Van Dorsselaer A."/>
            <person name="Carapito C."/>
        </authorList>
    </citation>
    <scope>IDENTIFICATION BY MASS SPECTROMETRY [LARGE SCALE ANALYSIS]</scope>
</reference>
<organism>
    <name type="scientific">Homo sapiens</name>
    <name type="common">Human</name>
    <dbReference type="NCBI Taxonomy" id="9606"/>
    <lineage>
        <taxon>Eukaryota</taxon>
        <taxon>Metazoa</taxon>
        <taxon>Chordata</taxon>
        <taxon>Craniata</taxon>
        <taxon>Vertebrata</taxon>
        <taxon>Euteleostomi</taxon>
        <taxon>Mammalia</taxon>
        <taxon>Eutheria</taxon>
        <taxon>Euarchontoglires</taxon>
        <taxon>Primates</taxon>
        <taxon>Haplorrhini</taxon>
        <taxon>Catarrhini</taxon>
        <taxon>Hominidae</taxon>
        <taxon>Homo</taxon>
    </lineage>
</organism>